<evidence type="ECO:0000255" key="1"/>
<evidence type="ECO:0000305" key="2"/>
<sequence>MLRVIWKHSSRVTRSIELSNISTTNHTRSLRRLSWISPRRFYAQSWDDRQPNDKIDAHIKVQKLMDQINSRPNVLEKLEKVSNIMIEKKLVNLDGTSANEENTMKPWQMIKILMDRDLRHAMKEFKLELEKSGIQLGPEQLAPLMTVLGLEKKK</sequence>
<dbReference type="EMBL" id="Z72562">
    <property type="status" value="NOT_ANNOTATED_CDS"/>
    <property type="molecule type" value="Genomic_DNA"/>
</dbReference>
<dbReference type="EMBL" id="Z72563">
    <property type="status" value="NOT_ANNOTATED_CDS"/>
    <property type="molecule type" value="Genomic_DNA"/>
</dbReference>
<dbReference type="EMBL" id="BK006941">
    <property type="protein sequence ID" value="DAA08059.2"/>
    <property type="molecule type" value="Genomic_DNA"/>
</dbReference>
<dbReference type="SMR" id="P0C5N3"/>
<dbReference type="BioGRID" id="624550">
    <property type="interactions" value="6"/>
</dbReference>
<dbReference type="PaxDb" id="4932-YGL041W-A"/>
<dbReference type="PeptideAtlas" id="P0C5N3"/>
<dbReference type="EnsemblFungi" id="YGL041W-A_mRNA">
    <property type="protein sequence ID" value="YGL041W-A"/>
    <property type="gene ID" value="YGL041W-A"/>
</dbReference>
<dbReference type="KEGG" id="sce:YGL041W-A"/>
<dbReference type="AGR" id="SGD:S000028826"/>
<dbReference type="SGD" id="S000028826">
    <property type="gene designation" value="YGL041W-A"/>
</dbReference>
<dbReference type="VEuPathDB" id="FungiDB:YGL041W-A"/>
<dbReference type="eggNOG" id="ENOG502S3YH">
    <property type="taxonomic scope" value="Eukaryota"/>
</dbReference>
<dbReference type="HOGENOM" id="CLU_150213_0_0_1"/>
<dbReference type="InParanoid" id="P0C5N3"/>
<dbReference type="OMA" id="RAYAKSW"/>
<dbReference type="OrthoDB" id="10008801at2759"/>
<dbReference type="BioCyc" id="YEAST:G3O-31020-MONOMER"/>
<dbReference type="BioGRID-ORCS" id="5814844">
    <property type="hits" value="2 hits in 10 CRISPR screens"/>
</dbReference>
<dbReference type="PRO" id="PR:P0C5N3"/>
<dbReference type="Proteomes" id="UP000002311">
    <property type="component" value="Chromosome VII"/>
</dbReference>
<dbReference type="RNAct" id="P0C5N3">
    <property type="molecule type" value="protein"/>
</dbReference>
<dbReference type="GO" id="GO:0005739">
    <property type="term" value="C:mitochondrion"/>
    <property type="evidence" value="ECO:0007669"/>
    <property type="project" value="UniProtKB-SubCell"/>
</dbReference>
<reference key="1">
    <citation type="journal article" date="1997" name="Yeast">
        <title>The characterization of two new clusters of duplicated genes suggests a 'Lego' organization of the yeast Saccharomyces cerevisiae chromosomes.</title>
        <authorList>
            <person name="Feuermann M."/>
            <person name="de Montigny J."/>
            <person name="Potier S."/>
            <person name="Souciet J.-L."/>
        </authorList>
    </citation>
    <scope>NUCLEOTIDE SEQUENCE [GENOMIC DNA]</scope>
    <source>
        <strain>ATCC 204508 / S288c</strain>
    </source>
</reference>
<reference key="2">
    <citation type="journal article" date="1997" name="Nature">
        <title>The nucleotide sequence of Saccharomyces cerevisiae chromosome VII.</title>
        <authorList>
            <person name="Tettelin H."/>
            <person name="Agostoni-Carbone M.L."/>
            <person name="Albermann K."/>
            <person name="Albers M."/>
            <person name="Arroyo J."/>
            <person name="Backes U."/>
            <person name="Barreiros T."/>
            <person name="Bertani I."/>
            <person name="Bjourson A.J."/>
            <person name="Brueckner M."/>
            <person name="Bruschi C.V."/>
            <person name="Carignani G."/>
            <person name="Castagnoli L."/>
            <person name="Cerdan E."/>
            <person name="Clemente M.L."/>
            <person name="Coblenz A."/>
            <person name="Coglievina M."/>
            <person name="Coissac E."/>
            <person name="Defoor E."/>
            <person name="Del Bino S."/>
            <person name="Delius H."/>
            <person name="Delneri D."/>
            <person name="de Wergifosse P."/>
            <person name="Dujon B."/>
            <person name="Durand P."/>
            <person name="Entian K.-D."/>
            <person name="Eraso P."/>
            <person name="Escribano V."/>
            <person name="Fabiani L."/>
            <person name="Fartmann B."/>
            <person name="Feroli F."/>
            <person name="Feuermann M."/>
            <person name="Frontali L."/>
            <person name="Garcia-Gonzalez M."/>
            <person name="Garcia-Saez M.I."/>
            <person name="Goffeau A."/>
            <person name="Guerreiro P."/>
            <person name="Hani J."/>
            <person name="Hansen M."/>
            <person name="Hebling U."/>
            <person name="Hernandez K."/>
            <person name="Heumann K."/>
            <person name="Hilger F."/>
            <person name="Hofmann B."/>
            <person name="Indge K.J."/>
            <person name="James C.M."/>
            <person name="Klima R."/>
            <person name="Koetter P."/>
            <person name="Kramer B."/>
            <person name="Kramer W."/>
            <person name="Lauquin G."/>
            <person name="Leuther H."/>
            <person name="Louis E.J."/>
            <person name="Maillier E."/>
            <person name="Marconi A."/>
            <person name="Martegani E."/>
            <person name="Mazon M.J."/>
            <person name="Mazzoni C."/>
            <person name="McReynolds A.D.K."/>
            <person name="Melchioretto P."/>
            <person name="Mewes H.-W."/>
            <person name="Minenkova O."/>
            <person name="Mueller-Auer S."/>
            <person name="Nawrocki A."/>
            <person name="Netter P."/>
            <person name="Neu R."/>
            <person name="Nombela C."/>
            <person name="Oliver S.G."/>
            <person name="Panzeri L."/>
            <person name="Paoluzi S."/>
            <person name="Plevani P."/>
            <person name="Portetelle D."/>
            <person name="Portillo F."/>
            <person name="Potier S."/>
            <person name="Purnelle B."/>
            <person name="Rieger M."/>
            <person name="Riles L."/>
            <person name="Rinaldi T."/>
            <person name="Robben J."/>
            <person name="Rodrigues-Pousada C."/>
            <person name="Rodriguez-Belmonte E."/>
            <person name="Rodriguez-Torres A.M."/>
            <person name="Rose M."/>
            <person name="Ruzzi M."/>
            <person name="Saliola M."/>
            <person name="Sanchez-Perez M."/>
            <person name="Schaefer B."/>
            <person name="Schaefer M."/>
            <person name="Scharfe M."/>
            <person name="Schmidheini T."/>
            <person name="Schreer A."/>
            <person name="Skala J."/>
            <person name="Souciet J.-L."/>
            <person name="Steensma H.Y."/>
            <person name="Talla E."/>
            <person name="Thierry A."/>
            <person name="Vandenbol M."/>
            <person name="van der Aart Q.J.M."/>
            <person name="Van Dyck L."/>
            <person name="Vanoni M."/>
            <person name="Verhasselt P."/>
            <person name="Voet M."/>
            <person name="Volckaert G."/>
            <person name="Wambutt R."/>
            <person name="Watson M.D."/>
            <person name="Weber N."/>
            <person name="Wedler E."/>
            <person name="Wedler H."/>
            <person name="Wipfli P."/>
            <person name="Wolf K."/>
            <person name="Wright L.F."/>
            <person name="Zaccaria P."/>
            <person name="Zimmermann M."/>
            <person name="Zollner A."/>
            <person name="Kleine K."/>
        </authorList>
    </citation>
    <scope>NUCLEOTIDE SEQUENCE [LARGE SCALE GENOMIC DNA]</scope>
    <source>
        <strain>ATCC 204508 / S288c</strain>
    </source>
</reference>
<reference key="3">
    <citation type="journal article" date="2014" name="G3 (Bethesda)">
        <title>The reference genome sequence of Saccharomyces cerevisiae: Then and now.</title>
        <authorList>
            <person name="Engel S.R."/>
            <person name="Dietrich F.S."/>
            <person name="Fisk D.G."/>
            <person name="Binkley G."/>
            <person name="Balakrishnan R."/>
            <person name="Costanzo M.C."/>
            <person name="Dwight S.S."/>
            <person name="Hitz B.C."/>
            <person name="Karra K."/>
            <person name="Nash R.S."/>
            <person name="Weng S."/>
            <person name="Wong E.D."/>
            <person name="Lloyd P."/>
            <person name="Skrzypek M.S."/>
            <person name="Miyasato S.R."/>
            <person name="Simison M."/>
            <person name="Cherry J.M."/>
        </authorList>
    </citation>
    <scope>GENOME REANNOTATION</scope>
    <scope>SEQUENCE REVISION</scope>
    <source>
        <strain>ATCC 204508 / S288c</strain>
    </source>
</reference>
<reference key="4">
    <citation type="journal article" date="2002" name="Genome Res.">
        <title>Parallel identification of new genes in Saccharomyces cerevisiae.</title>
        <authorList>
            <person name="Oshiro G."/>
            <person name="Wodicka L.M."/>
            <person name="Washburn M.P."/>
            <person name="Yates J.R. III"/>
            <person name="Lockhart D.J."/>
            <person name="Winzeler E.A."/>
        </authorList>
    </citation>
    <scope>IDENTIFICATION BY MASS SPECTROMETRY</scope>
</reference>
<keyword id="KW-0496">Mitochondrion</keyword>
<keyword id="KW-1185">Reference proteome</keyword>
<keyword id="KW-0809">Transit peptide</keyword>
<protein>
    <recommendedName>
        <fullName>Uncharacterized protein YGL041W-A, mitochondrial</fullName>
    </recommendedName>
</protein>
<feature type="transit peptide" description="Mitochondrion" evidence="1">
    <location>
        <begin position="1"/>
        <end position="42"/>
    </location>
</feature>
<feature type="chain" id="PRO_0000309031" description="Uncharacterized protein YGL041W-A, mitochondrial">
    <location>
        <begin position="43"/>
        <end position="154"/>
    </location>
</feature>
<gene>
    <name type="ordered locus">YGL041W-A</name>
</gene>
<organism>
    <name type="scientific">Saccharomyces cerevisiae (strain ATCC 204508 / S288c)</name>
    <name type="common">Baker's yeast</name>
    <dbReference type="NCBI Taxonomy" id="559292"/>
    <lineage>
        <taxon>Eukaryota</taxon>
        <taxon>Fungi</taxon>
        <taxon>Dikarya</taxon>
        <taxon>Ascomycota</taxon>
        <taxon>Saccharomycotina</taxon>
        <taxon>Saccharomycetes</taxon>
        <taxon>Saccharomycetales</taxon>
        <taxon>Saccharomycetaceae</taxon>
        <taxon>Saccharomyces</taxon>
    </lineage>
</organism>
<comment type="subcellular location">
    <subcellularLocation>
        <location evidence="2">Mitochondrion</location>
    </subcellularLocation>
</comment>
<name>YG41A_YEAST</name>
<proteinExistence type="evidence at protein level"/>
<accession>P0C5N3</accession>
<accession>D6VU98</accession>